<proteinExistence type="predicted"/>
<name>YG121_YEAST</name>
<sequence>MSRHKYKLWMCIAKGKRGVGERNTFVPKCSYAPFCASEVLDQLLRGDNSIVYNFYLKNGSGSVYIGSVFLI</sequence>
<feature type="chain" id="PRO_0000245383" description="Uncharacterized protein YGR121W-A">
    <location>
        <begin position="1"/>
        <end position="71"/>
    </location>
</feature>
<reference key="1">
    <citation type="journal article" date="1997" name="Nature">
        <title>The nucleotide sequence of Saccharomyces cerevisiae chromosome VII.</title>
        <authorList>
            <person name="Tettelin H."/>
            <person name="Agostoni-Carbone M.L."/>
            <person name="Albermann K."/>
            <person name="Albers M."/>
            <person name="Arroyo J."/>
            <person name="Backes U."/>
            <person name="Barreiros T."/>
            <person name="Bertani I."/>
            <person name="Bjourson A.J."/>
            <person name="Brueckner M."/>
            <person name="Bruschi C.V."/>
            <person name="Carignani G."/>
            <person name="Castagnoli L."/>
            <person name="Cerdan E."/>
            <person name="Clemente M.L."/>
            <person name="Coblenz A."/>
            <person name="Coglievina M."/>
            <person name="Coissac E."/>
            <person name="Defoor E."/>
            <person name="Del Bino S."/>
            <person name="Delius H."/>
            <person name="Delneri D."/>
            <person name="de Wergifosse P."/>
            <person name="Dujon B."/>
            <person name="Durand P."/>
            <person name="Entian K.-D."/>
            <person name="Eraso P."/>
            <person name="Escribano V."/>
            <person name="Fabiani L."/>
            <person name="Fartmann B."/>
            <person name="Feroli F."/>
            <person name="Feuermann M."/>
            <person name="Frontali L."/>
            <person name="Garcia-Gonzalez M."/>
            <person name="Garcia-Saez M.I."/>
            <person name="Goffeau A."/>
            <person name="Guerreiro P."/>
            <person name="Hani J."/>
            <person name="Hansen M."/>
            <person name="Hebling U."/>
            <person name="Hernandez K."/>
            <person name="Heumann K."/>
            <person name="Hilger F."/>
            <person name="Hofmann B."/>
            <person name="Indge K.J."/>
            <person name="James C.M."/>
            <person name="Klima R."/>
            <person name="Koetter P."/>
            <person name="Kramer B."/>
            <person name="Kramer W."/>
            <person name="Lauquin G."/>
            <person name="Leuther H."/>
            <person name="Louis E.J."/>
            <person name="Maillier E."/>
            <person name="Marconi A."/>
            <person name="Martegani E."/>
            <person name="Mazon M.J."/>
            <person name="Mazzoni C."/>
            <person name="McReynolds A.D.K."/>
            <person name="Melchioretto P."/>
            <person name="Mewes H.-W."/>
            <person name="Minenkova O."/>
            <person name="Mueller-Auer S."/>
            <person name="Nawrocki A."/>
            <person name="Netter P."/>
            <person name="Neu R."/>
            <person name="Nombela C."/>
            <person name="Oliver S.G."/>
            <person name="Panzeri L."/>
            <person name="Paoluzi S."/>
            <person name="Plevani P."/>
            <person name="Portetelle D."/>
            <person name="Portillo F."/>
            <person name="Potier S."/>
            <person name="Purnelle B."/>
            <person name="Rieger M."/>
            <person name="Riles L."/>
            <person name="Rinaldi T."/>
            <person name="Robben J."/>
            <person name="Rodrigues-Pousada C."/>
            <person name="Rodriguez-Belmonte E."/>
            <person name="Rodriguez-Torres A.M."/>
            <person name="Rose M."/>
            <person name="Ruzzi M."/>
            <person name="Saliola M."/>
            <person name="Sanchez-Perez M."/>
            <person name="Schaefer B."/>
            <person name="Schaefer M."/>
            <person name="Scharfe M."/>
            <person name="Schmidheini T."/>
            <person name="Schreer A."/>
            <person name="Skala J."/>
            <person name="Souciet J.-L."/>
            <person name="Steensma H.Y."/>
            <person name="Talla E."/>
            <person name="Thierry A."/>
            <person name="Vandenbol M."/>
            <person name="van der Aart Q.J.M."/>
            <person name="Van Dyck L."/>
            <person name="Vanoni M."/>
            <person name="Verhasselt P."/>
            <person name="Voet M."/>
            <person name="Volckaert G."/>
            <person name="Wambutt R."/>
            <person name="Watson M.D."/>
            <person name="Weber N."/>
            <person name="Wedler E."/>
            <person name="Wedler H."/>
            <person name="Wipfli P."/>
            <person name="Wolf K."/>
            <person name="Wright L.F."/>
            <person name="Zaccaria P."/>
            <person name="Zimmermann M."/>
            <person name="Zollner A."/>
            <person name="Kleine K."/>
        </authorList>
    </citation>
    <scope>NUCLEOTIDE SEQUENCE [LARGE SCALE GENOMIC DNA]</scope>
    <source>
        <strain>ATCC 204508 / S288c</strain>
    </source>
</reference>
<reference key="2">
    <citation type="journal article" date="2014" name="G3 (Bethesda)">
        <title>The reference genome sequence of Saccharomyces cerevisiae: Then and now.</title>
        <authorList>
            <person name="Engel S.R."/>
            <person name="Dietrich F.S."/>
            <person name="Fisk D.G."/>
            <person name="Binkley G."/>
            <person name="Balakrishnan R."/>
            <person name="Costanzo M.C."/>
            <person name="Dwight S.S."/>
            <person name="Hitz B.C."/>
            <person name="Karra K."/>
            <person name="Nash R.S."/>
            <person name="Weng S."/>
            <person name="Wong E.D."/>
            <person name="Lloyd P."/>
            <person name="Skrzypek M.S."/>
            <person name="Miyasato S.R."/>
            <person name="Simison M."/>
            <person name="Cherry J.M."/>
        </authorList>
    </citation>
    <scope>GENOME REANNOTATION</scope>
    <source>
        <strain>ATCC 204508 / S288c</strain>
    </source>
</reference>
<reference key="3">
    <citation type="journal article" date="2003" name="Genome Res.">
        <title>Systematic discovery of new genes in the Saccharomyces cerevisiae genome.</title>
        <authorList>
            <person name="Kessler M.M."/>
            <person name="Zeng Q."/>
            <person name="Hogan S."/>
            <person name="Cook R."/>
            <person name="Morales A.J."/>
            <person name="Cottarel G."/>
        </authorList>
    </citation>
    <scope>GENOME REANNOTATION</scope>
</reference>
<protein>
    <recommendedName>
        <fullName>Uncharacterized protein YGR121W-A</fullName>
    </recommendedName>
</protein>
<gene>
    <name type="ordered locus">YGR121W-A</name>
</gene>
<dbReference type="EMBL" id="Z72906">
    <property type="status" value="NOT_ANNOTATED_CDS"/>
    <property type="molecule type" value="Genomic_DNA"/>
</dbReference>
<dbReference type="EMBL" id="BK006941">
    <property type="protein sequence ID" value="DAA08214.1"/>
    <property type="molecule type" value="Genomic_DNA"/>
</dbReference>
<dbReference type="RefSeq" id="NP_878078.1">
    <property type="nucleotide sequence ID" value="NM_001184551.1"/>
</dbReference>
<dbReference type="BioGRID" id="37000">
    <property type="interactions" value="33"/>
</dbReference>
<dbReference type="FunCoup" id="Q3E816">
    <property type="interactions" value="13"/>
</dbReference>
<dbReference type="STRING" id="4932.YGR121W-A"/>
<dbReference type="PaxDb" id="4932-YGR121W-A"/>
<dbReference type="EnsemblFungi" id="YGR121W-A_mRNA">
    <property type="protein sequence ID" value="YGR121W-A"/>
    <property type="gene ID" value="YGR121W-A"/>
</dbReference>
<dbReference type="GeneID" id="1466458"/>
<dbReference type="KEGG" id="sce:YGR121W-A"/>
<dbReference type="AGR" id="SGD:S000028550"/>
<dbReference type="SGD" id="S000028550">
    <property type="gene designation" value="YGR121W-A"/>
</dbReference>
<dbReference type="VEuPathDB" id="FungiDB:YGR121W-A"/>
<dbReference type="HOGENOM" id="CLU_2741465_0_0_1"/>
<dbReference type="InParanoid" id="Q3E816"/>
<dbReference type="OrthoDB" id="10268746at2759"/>
<dbReference type="BioCyc" id="YEAST:G3O-31011-MONOMER"/>
<dbReference type="BioGRID-ORCS" id="1466458">
    <property type="hits" value="0 hits in 10 CRISPR screens"/>
</dbReference>
<dbReference type="PRO" id="PR:Q3E816"/>
<dbReference type="Proteomes" id="UP000002311">
    <property type="component" value="Chromosome VII"/>
</dbReference>
<dbReference type="RNAct" id="Q3E816">
    <property type="molecule type" value="protein"/>
</dbReference>
<keyword id="KW-1185">Reference proteome</keyword>
<accession>Q3E816</accession>
<accession>D6VUQ3</accession>
<organism>
    <name type="scientific">Saccharomyces cerevisiae (strain ATCC 204508 / S288c)</name>
    <name type="common">Baker's yeast</name>
    <dbReference type="NCBI Taxonomy" id="559292"/>
    <lineage>
        <taxon>Eukaryota</taxon>
        <taxon>Fungi</taxon>
        <taxon>Dikarya</taxon>
        <taxon>Ascomycota</taxon>
        <taxon>Saccharomycotina</taxon>
        <taxon>Saccharomycetes</taxon>
        <taxon>Saccharomycetales</taxon>
        <taxon>Saccharomycetaceae</taxon>
        <taxon>Saccharomyces</taxon>
    </lineage>
</organism>